<dbReference type="EMBL" id="MN782533">
    <property type="status" value="NOT_ANNOTATED_CDS"/>
    <property type="molecule type" value="mRNA"/>
</dbReference>
<dbReference type="EMBL" id="X02592">
    <property type="protein sequence ID" value="CAA26435.1"/>
    <property type="status" value="ALT_SEQ"/>
    <property type="molecule type" value="mRNA"/>
</dbReference>
<dbReference type="EMBL" id="AE000521">
    <property type="protein sequence ID" value="AAB69036.1"/>
    <property type="molecule type" value="Genomic_DNA"/>
</dbReference>
<dbReference type="EMBL" id="AC243965">
    <property type="status" value="NOT_ANNOTATED_CDS"/>
    <property type="molecule type" value="Genomic_DNA"/>
</dbReference>
<dbReference type="EMDB" id="EMD-28572"/>
<dbReference type="EMDB" id="EMD-41658"/>
<dbReference type="EMDB" id="EMD-41660"/>
<dbReference type="EMDB" id="EMD-44417"/>
<dbReference type="EMDB" id="EMD-45166"/>
<dbReference type="EMDB" id="EMD-60321"/>
<dbReference type="SMR" id="P0DTU3"/>
<dbReference type="CORUM" id="P0DTU3"/>
<dbReference type="FunCoup" id="P0DTU3">
    <property type="interactions" value="90"/>
</dbReference>
<dbReference type="GlyCosmos" id="P0DTU3">
    <property type="glycosylation" value="5 sites, No reported glycans"/>
</dbReference>
<dbReference type="GlyGen" id="P0DTU3">
    <property type="glycosylation" value="5 sites"/>
</dbReference>
<dbReference type="MassIVE" id="P0DTU3"/>
<dbReference type="PeptideAtlas" id="P0DTU3"/>
<dbReference type="AGR" id="HGNC:12027"/>
<dbReference type="GeneCards" id="TRA"/>
<dbReference type="HGNC" id="HGNC:12027">
    <property type="gene designation" value="TRA"/>
</dbReference>
<dbReference type="MalaCards" id="TRA"/>
<dbReference type="neXtProt" id="NX_P0DTU3"/>
<dbReference type="InParanoid" id="P0DTU3"/>
<dbReference type="Proteomes" id="UP000005640">
    <property type="component" value="Unplaced"/>
</dbReference>
<dbReference type="GO" id="GO:0042105">
    <property type="term" value="C:alpha-beta T cell receptor complex"/>
    <property type="evidence" value="ECO:0000314"/>
    <property type="project" value="UniProtKB"/>
</dbReference>
<dbReference type="GO" id="GO:0038023">
    <property type="term" value="F:signaling receptor activity"/>
    <property type="evidence" value="ECO:0000314"/>
    <property type="project" value="UniProtKB"/>
</dbReference>
<dbReference type="GO" id="GO:0002355">
    <property type="term" value="P:detection of tumor cell"/>
    <property type="evidence" value="ECO:0000314"/>
    <property type="project" value="UniProtKB"/>
</dbReference>
<dbReference type="GO" id="GO:0009617">
    <property type="term" value="P:response to bacterium"/>
    <property type="evidence" value="ECO:0000318"/>
    <property type="project" value="GO_Central"/>
</dbReference>
<dbReference type="GO" id="GO:0002419">
    <property type="term" value="P:T cell mediated cytotoxicity directed against tumor cell target"/>
    <property type="evidence" value="ECO:0000314"/>
    <property type="project" value="UniProtKB"/>
</dbReference>
<dbReference type="CDD" id="cd07688">
    <property type="entry name" value="IgC_TCR_alpha"/>
    <property type="match status" value="1"/>
</dbReference>
<dbReference type="FunFam" id="2.60.40.10:FF:003018">
    <property type="entry name" value="T cell receptor alpha constant"/>
    <property type="match status" value="1"/>
</dbReference>
<dbReference type="FunFam" id="2.60.40.10:FF:000878">
    <property type="entry name" value="T cell receptor alpha variable 38-1"/>
    <property type="match status" value="1"/>
</dbReference>
<dbReference type="Gene3D" id="2.60.40.10">
    <property type="entry name" value="Immunoglobulins"/>
    <property type="match status" value="2"/>
</dbReference>
<dbReference type="InterPro" id="IPR007110">
    <property type="entry name" value="Ig-like_dom"/>
</dbReference>
<dbReference type="InterPro" id="IPR036179">
    <property type="entry name" value="Ig-like_dom_sf"/>
</dbReference>
<dbReference type="InterPro" id="IPR013783">
    <property type="entry name" value="Ig-like_fold"/>
</dbReference>
<dbReference type="InterPro" id="IPR003599">
    <property type="entry name" value="Ig_sub"/>
</dbReference>
<dbReference type="InterPro" id="IPR013106">
    <property type="entry name" value="Ig_V-set"/>
</dbReference>
<dbReference type="InterPro" id="IPR015370">
    <property type="entry name" value="TCR_alpha_C"/>
</dbReference>
<dbReference type="InterPro" id="IPR052051">
    <property type="entry name" value="TCR_complex_component"/>
</dbReference>
<dbReference type="PANTHER" id="PTHR19433:SF72">
    <property type="entry name" value="T CELL RECEPTOR ALPHA CHAIN MC.7.G5-RELATED"/>
    <property type="match status" value="1"/>
</dbReference>
<dbReference type="PANTHER" id="PTHR19433">
    <property type="entry name" value="T-CELL RECEPTOR ALPHA CHAIN V REGION-RELATED"/>
    <property type="match status" value="1"/>
</dbReference>
<dbReference type="Pfam" id="PF09291">
    <property type="entry name" value="DUF1968"/>
    <property type="match status" value="1"/>
</dbReference>
<dbReference type="Pfam" id="PF07686">
    <property type="entry name" value="V-set"/>
    <property type="match status" value="1"/>
</dbReference>
<dbReference type="SMART" id="SM00409">
    <property type="entry name" value="IG"/>
    <property type="match status" value="1"/>
</dbReference>
<dbReference type="SMART" id="SM00406">
    <property type="entry name" value="IGv"/>
    <property type="match status" value="1"/>
</dbReference>
<dbReference type="SUPFAM" id="SSF48726">
    <property type="entry name" value="Immunoglobulin"/>
    <property type="match status" value="2"/>
</dbReference>
<dbReference type="PROSITE" id="PS50835">
    <property type="entry name" value="IG_LIKE"/>
    <property type="match status" value="1"/>
</dbReference>
<keyword id="KW-1064">Adaptive immunity</keyword>
<keyword id="KW-1003">Cell membrane</keyword>
<keyword id="KW-1015">Disulfide bond</keyword>
<keyword id="KW-0325">Glycoprotein</keyword>
<keyword id="KW-0391">Immunity</keyword>
<keyword id="KW-0472">Membrane</keyword>
<keyword id="KW-0675">Receptor</keyword>
<keyword id="KW-1185">Reference proteome</keyword>
<keyword id="KW-0732">Signal</keyword>
<keyword id="KW-0812">Transmembrane</keyword>
<keyword id="KW-1133">Transmembrane helix</keyword>
<evidence type="ECO:0000250" key="1">
    <source>
        <dbReference type="UniProtKB" id="P01848"/>
    </source>
</evidence>
<evidence type="ECO:0000250" key="2">
    <source>
        <dbReference type="UniProtKB" id="P0DSE1"/>
    </source>
</evidence>
<evidence type="ECO:0000255" key="3"/>
<evidence type="ECO:0000255" key="4">
    <source>
        <dbReference type="PROSITE-ProRule" id="PRU00114"/>
    </source>
</evidence>
<evidence type="ECO:0000255" key="5">
    <source>
        <dbReference type="PROSITE-ProRule" id="PRU00498"/>
    </source>
</evidence>
<evidence type="ECO:0000269" key="6">
    <source>
    </source>
</evidence>
<evidence type="ECO:0000305" key="7"/>
<evidence type="ECO:0000305" key="8">
    <source>
    </source>
</evidence>
<evidence type="ECO:0000305" key="9">
    <source>
    </source>
</evidence>
<evidence type="ECO:0000312" key="10">
    <source>
        <dbReference type="HGNC" id="HGNC:12027"/>
    </source>
</evidence>
<reference key="1">
    <citation type="journal article" date="2020" name="Nat. Immunol.">
        <title>Genome-wide CRISPR-Cas9 screening reveals ubiquitous T cell cancer targeting via the monomorphic MHC class I-related protein MR1.</title>
        <authorList>
            <person name="Crowther M.D."/>
            <person name="Dolton G."/>
            <person name="Legut M."/>
            <person name="Caillaud M.E."/>
            <person name="Lloyd A."/>
            <person name="Attaf M."/>
            <person name="Galloway S.A.E."/>
            <person name="Rius C."/>
            <person name="Farrell C.P."/>
            <person name="Szomolay B."/>
            <person name="Ager A."/>
            <person name="Parker A.L."/>
            <person name="Fuller A."/>
            <person name="Donia M."/>
            <person name="McCluskey J."/>
            <person name="Rossjohn J."/>
            <person name="Svane I.M."/>
            <person name="Phillips J.D."/>
            <person name="Sewell A.K."/>
        </authorList>
    </citation>
    <scope>NUCLEOTIDE SEQUENCE [MRNA]</scope>
    <scope>REGION</scope>
    <scope>CDR3 DOMAIN</scope>
    <scope>FUNCTION</scope>
    <scope>SUBUNIT</scope>
    <scope>SUBCELLULAR LOCATION</scope>
    <scope>TISSUE SPECIFICITY</scope>
    <scope>CAUTION</scope>
</reference>
<reference key="2">
    <citation type="journal article" date="1985" name="EMBO J.">
        <title>The chromosomal location of T-cell receptor genes and a T cell rearranging gene: possible correlation with specific translocations in human T cell leukaemia.</title>
        <authorList>
            <person name="Rabbitts T.H."/>
            <person name="Lefranc M.P."/>
            <person name="Stinson M.A."/>
            <person name="Sims J.E."/>
            <person name="Schroder J."/>
            <person name="Steinmetz M."/>
            <person name="Spurr N.L."/>
            <person name="Solomon E."/>
            <person name="Goodfellow P.N."/>
        </authorList>
    </citation>
    <scope>NUCLEOTIDE SEQUENCE [MRNA] OF 136-275 (IMGT ALLELE TRAC*01)</scope>
</reference>
<reference key="3">
    <citation type="journal article" date="1985" name="Proc. Natl. Acad. Sci. U.S.A.">
        <title>Analysis of cDNA clones specific for human T cells and the alpha and beta chains of the T-cell receptor heterodimer from a human T-cell line.</title>
        <authorList>
            <person name="Yanagi Y."/>
            <person name="Chan A."/>
            <person name="Chin B."/>
            <person name="Minden M."/>
            <person name="Mak T.W."/>
        </authorList>
    </citation>
    <scope>NUCLEOTIDE SEQUENCE [MRNA] OF 136-275 (IMGT ALLELE TRAC*01)</scope>
</reference>
<reference key="4">
    <citation type="journal article" date="1997" name="Genome Res.">
        <title>Analysis of the 1.1-Mb human alpha/delta T-cell receptor locus with bacterial artificial chromosome clones.</title>
        <authorList>
            <person name="Boysen C."/>
            <person name="Simon M.I."/>
            <person name="Hood L."/>
        </authorList>
    </citation>
    <scope>NUCLEOTIDE SEQUENCE [GENOMIC DNA] OF 22-116 (IMGT ALLELE TRAV38-2/DV8*01)</scope>
</reference>
<reference key="5">
    <citation type="journal article" date="2003" name="Nature">
        <title>The DNA sequence and analysis of human chromosome 14.</title>
        <authorList>
            <person name="Heilig R."/>
            <person name="Eckenberg R."/>
            <person name="Petit J.-L."/>
            <person name="Fonknechten N."/>
            <person name="Da Silva C."/>
            <person name="Cattolico L."/>
            <person name="Levy M."/>
            <person name="Barbe V."/>
            <person name="De Berardinis V."/>
            <person name="Ureta-Vidal A."/>
            <person name="Pelletier E."/>
            <person name="Vico V."/>
            <person name="Anthouard V."/>
            <person name="Rowen L."/>
            <person name="Madan A."/>
            <person name="Qin S."/>
            <person name="Sun H."/>
            <person name="Du H."/>
            <person name="Pepin K."/>
            <person name="Artiguenave F."/>
            <person name="Robert C."/>
            <person name="Cruaud C."/>
            <person name="Bruels T."/>
            <person name="Jaillon O."/>
            <person name="Friedlander L."/>
            <person name="Samson G."/>
            <person name="Brottier P."/>
            <person name="Cure S."/>
            <person name="Segurens B."/>
            <person name="Aniere F."/>
            <person name="Samain S."/>
            <person name="Crespeau H."/>
            <person name="Abbasi N."/>
            <person name="Aiach N."/>
            <person name="Boscus D."/>
            <person name="Dickhoff R."/>
            <person name="Dors M."/>
            <person name="Dubois I."/>
            <person name="Friedman C."/>
            <person name="Gouyvenoux M."/>
            <person name="James R."/>
            <person name="Madan A."/>
            <person name="Mairey-Estrada B."/>
            <person name="Mangenot S."/>
            <person name="Martins N."/>
            <person name="Menard M."/>
            <person name="Oztas S."/>
            <person name="Ratcliffe A."/>
            <person name="Shaffer T."/>
            <person name="Trask B."/>
            <person name="Vacherie B."/>
            <person name="Bellemere C."/>
            <person name="Belser C."/>
            <person name="Besnard-Gonnet M."/>
            <person name="Bartol-Mavel D."/>
            <person name="Boutard M."/>
            <person name="Briez-Silla S."/>
            <person name="Combette S."/>
            <person name="Dufosse-Laurent V."/>
            <person name="Ferron C."/>
            <person name="Lechaplais C."/>
            <person name="Louesse C."/>
            <person name="Muselet D."/>
            <person name="Magdelenat G."/>
            <person name="Pateau E."/>
            <person name="Petit E."/>
            <person name="Sirvain-Trukniewicz P."/>
            <person name="Trybou A."/>
            <person name="Vega-Czarny N."/>
            <person name="Bataille E."/>
            <person name="Bluet E."/>
            <person name="Bordelais I."/>
            <person name="Dubois M."/>
            <person name="Dumont C."/>
            <person name="Guerin T."/>
            <person name="Haffray S."/>
            <person name="Hammadi R."/>
            <person name="Muanga J."/>
            <person name="Pellouin V."/>
            <person name="Robert D."/>
            <person name="Wunderle E."/>
            <person name="Gauguet G."/>
            <person name="Roy A."/>
            <person name="Sainte-Marthe L."/>
            <person name="Verdier J."/>
            <person name="Verdier-Discala C."/>
            <person name="Hillier L.W."/>
            <person name="Fulton L."/>
            <person name="McPherson J."/>
            <person name="Matsuda F."/>
            <person name="Wilson R."/>
            <person name="Scarpelli C."/>
            <person name="Gyapay G."/>
            <person name="Wincker P."/>
            <person name="Saurin W."/>
            <person name="Quetier F."/>
            <person name="Waterston R."/>
            <person name="Hood L."/>
            <person name="Weissenbach J."/>
        </authorList>
    </citation>
    <scope>NUCLEOTIDE SEQUENCE [LARGE SCALE GENOMIC DNA] (IMGT ALLELE TRAV38-2/DV8*01; ALLELE TRAJ31*01 AND ALLELE TRAC*01)</scope>
</reference>
<reference key="6">
    <citation type="journal article" date="1995" name="Immunogenetics">
        <title>Nomenclature for T-cell receptor (TCR) gene segments of the immune system.</title>
        <authorList>
            <consortium name="WHO-IUIS Nomenclature Sub-Committee on TCR Designation."/>
        </authorList>
    </citation>
    <scope>NOMENCLATURE</scope>
</reference>
<reference key="7">
    <citation type="journal article" date="2000" name="Exp. Clin. Immunogenet.">
        <title>Protein displays of the human T cell receptor alpha, beta, gamma and delta variable and joining regions.</title>
        <authorList>
            <person name="Folch G."/>
            <person name="Scaviner D."/>
            <person name="Contet V."/>
            <person name="Lefranc M.P."/>
        </authorList>
    </citation>
    <scope>CDR1 AND CDR2 DOMAINS</scope>
</reference>
<reference key="8">
    <citation type="journal article" date="2009" name="Immunogenetics">
        <title>A clonotype nomenclature for T cell receptors.</title>
        <authorList>
            <person name="Yassai M.B."/>
            <person name="Naumov Y.N."/>
            <person name="Naumova E.N."/>
            <person name="Gorski J."/>
        </authorList>
    </citation>
    <scope>NOMENCLATURE</scope>
</reference>
<comment type="function">
    <text evidence="1 6">The alpha chain of TRAV38-2DV8*01J31*01C*01/TRBV25-1*01J2S3*01C2*01 alpha-beta T cell receptor (TR) clonotype that displays pan-cancer cell recognition via the invariant MR1 molecule. On CD8-positive T cell clone MC.7.G5, likely recognizes tumor-specific or -associated metabolite(s) essential for cancer cell survival, triggering killing of many cancer cell types including lung, melanoma, leukemia, colon, breast, prostate, bone and ovarian cancer cells. Mediates cancer cell cytotoxicity in an HLA-independent manner. Has no reactivity to healthy cells, even stressed or infected by bacteria (PubMed:31959982). Antigen recognition initiates TR-CD3 clustering on the cell surface and intracellular activation of LCK that phosphorylates the ITAM motifs of CD3G, CD3D, CD3E and CD247 enabling the recruitment of ZAP70. In turn, ZAP70 phosphorylates LAT, which recruits numerous signaling molecules to form the LAT signalosome. The LAT signalosome propagates signal branching to three major signaling pathways, the calcium, the mitogen-activated protein kinase (MAPK) kinase and the nuclear factor NF-kappa-B (NF-kB) pathways, leading to the mobilization of transcription factors that are critical for gene expression and essential for T cell differentiation into effector/memory T cells (By similarity).</text>
</comment>
<comment type="subunit">
    <text evidence="1 6">Disulfide-linked heterodimer with TRBV25-1*01J2S3*01C2*01 beta chain (PubMed:31959982). The alpha-beta TR associates with the transmembrane signaling CD3 coreceptor proteins to form the TR-CD3 (TCR). The assembly of alpha-beta TR heterodimers with CD3 occurs in the endoplasmic reticulum where a single alpha-beta TR heterodimer associates with one CD3D-CD3E heterodimer, one CD3G-CD3E heterodimer and one CD247 homodimer forming a stable octameric structure. CD3D-CD3E and CD3G-CD3E heterodimers preferentially associate with TR alpha and TR beta chains (via TM domain), respectively. The association of the CD247 homodimer is the last step of TCR assembly in the endoplasmic reticulum and is required for transport to the cell surface (By similarity).</text>
</comment>
<comment type="subcellular location">
    <subcellularLocation>
        <location evidence="6">Cell membrane</location>
    </subcellularLocation>
</comment>
<comment type="tissue specificity">
    <text evidence="6">Expressed in MR1-restricted CD8-positive T cells.</text>
</comment>
<comment type="domain">
    <text evidence="2">The complementarity-determining region CDR1 confers specificity to the metabolite antigen.</text>
</comment>
<comment type="domain">
    <text evidence="2">The complementarity-determining region CDR2 confers specificity to the metabolite antigen.</text>
</comment>
<comment type="domain">
    <text evidence="2">The complementarity-determining region CDR3 confers specificity to the metabolite antigen.</text>
</comment>
<comment type="domain">
    <text evidence="1">The connecting peptide (CP) domain contributes to the TR-CD3 assembly and signal transduction.</text>
</comment>
<comment type="domain">
    <text evidence="1">The TM domain mediates the interaction with the CD3 subunits.</text>
</comment>
<comment type="caution">
    <text evidence="6">This sequence is an example of a full-length TR alpha chain. Pan-cancer TRAV38-2DV8*01J31*01C*01 TR alpha chain is generated by somatic recombination of variable TRAV38-2DV8 (AC A0JD32) and joining TRAJ31 (AC A0A075B700) gene segments spliced to constant TRAC (AC P01848) gene segment.</text>
</comment>
<comment type="sequence caution" evidence="7">
    <conflict type="miscellaneous discrepancy">
        <sequence resource="EMBL-CDS" id="CAA26435"/>
    </conflict>
    <text>Chimeric mRNA corresponding to regions V, J and C of T cell receptor (TR) alpha chain.</text>
</comment>
<gene>
    <name evidence="10" type="primary">TRA</name>
</gene>
<organism>
    <name type="scientific">Homo sapiens</name>
    <name type="common">Human</name>
    <dbReference type="NCBI Taxonomy" id="9606"/>
    <lineage>
        <taxon>Eukaryota</taxon>
        <taxon>Metazoa</taxon>
        <taxon>Chordata</taxon>
        <taxon>Craniata</taxon>
        <taxon>Vertebrata</taxon>
        <taxon>Euteleostomi</taxon>
        <taxon>Mammalia</taxon>
        <taxon>Eutheria</taxon>
        <taxon>Euarchontoglires</taxon>
        <taxon>Primates</taxon>
        <taxon>Haplorrhini</taxon>
        <taxon>Catarrhini</taxon>
        <taxon>Hominidae</taxon>
        <taxon>Homo</taxon>
    </lineage>
</organism>
<name>TRAR2_HUMAN</name>
<protein>
    <recommendedName>
        <fullName>T cell receptor alpha chain MC.7.G5</fullName>
    </recommendedName>
    <alternativeName>
        <fullName>MC.7.G5 TRA</fullName>
    </alternativeName>
    <alternativeName>
        <fullName>TR alpha chain TRAV38-2DV8*01J31*01C*01</fullName>
    </alternativeName>
</protein>
<feature type="signal peptide" evidence="3">
    <location>
        <begin position="1"/>
        <end position="21"/>
    </location>
</feature>
<feature type="chain" id="PRO_0000450077" description="T cell receptor alpha chain MC.7.G5">
    <location>
        <begin position="22"/>
        <end position="275"/>
    </location>
</feature>
<feature type="transmembrane region" description="Helical" evidence="1 3">
    <location>
        <begin position="251"/>
        <end position="273"/>
    </location>
</feature>
<feature type="topological domain" description="Cytoplasmic" evidence="3">
    <location>
        <begin position="274"/>
        <end position="275"/>
    </location>
</feature>
<feature type="domain" description="Ig-like V-type" evidence="4">
    <location>
        <begin position="22"/>
        <end position="116"/>
    </location>
</feature>
<feature type="domain" description="Ig-like C1-type" evidence="4">
    <location>
        <begin position="154"/>
        <end position="242"/>
    </location>
</feature>
<feature type="region of interest" description="T cell receptor alpha variable 38-2DV8" evidence="9">
    <location>
        <begin position="22"/>
        <end position="116"/>
    </location>
</feature>
<feature type="region of interest" description="CDR1" evidence="8">
    <location>
        <begin position="47"/>
        <end position="53"/>
    </location>
</feature>
<feature type="region of interest" description="CDR2" evidence="8">
    <location>
        <begin position="71"/>
        <end position="81"/>
    </location>
</feature>
<feature type="region of interest" description="CDR3" evidence="6 8">
    <location>
        <begin position="112"/>
        <end position="124"/>
    </location>
</feature>
<feature type="region of interest" description="T cell receptor alpha joining 31" evidence="9">
    <location>
        <begin position="119"/>
        <end position="134"/>
    </location>
</feature>
<feature type="region of interest" description="T cell receptor alpha constant">
    <location>
        <begin position="136"/>
        <end position="275"/>
    </location>
</feature>
<feature type="region of interest" description="Connecting peptide" evidence="1">
    <location>
        <begin position="229"/>
        <end position="250"/>
    </location>
</feature>
<feature type="glycosylation site" description="N-linked (GlcNAc...) asparagine" evidence="3">
    <location>
        <position position="78"/>
    </location>
</feature>
<feature type="glycosylation site" description="N-linked (GlcNAc...) asparagine" evidence="1 5">
    <location>
        <position position="167"/>
    </location>
</feature>
<feature type="glycosylation site" description="N-linked (GlcNAc...) asparagine" evidence="1 5">
    <location>
        <position position="201"/>
    </location>
</feature>
<feature type="glycosylation site" description="N-linked (GlcNAc...) asparagine" evidence="5">
    <location>
        <position position="212"/>
    </location>
</feature>
<feature type="glycosylation site" description="N-linked (GlcNAc...) asparagine" evidence="5">
    <location>
        <position position="248"/>
    </location>
</feature>
<feature type="disulfide bond" evidence="4">
    <location>
        <begin position="43"/>
        <end position="112"/>
    </location>
</feature>
<feature type="disulfide bond" evidence="1">
    <location>
        <begin position="157"/>
        <end position="207"/>
    </location>
</feature>
<feature type="disulfide bond" description="Interchain (with C-130 in TRBC1 or TRBC2)" evidence="1">
    <location>
        <position position="229"/>
    </location>
</feature>
<accession>P0DTU3</accession>
<sequence length="275" mass="30989">MACPGFLWALVISTCLEFSMAQTVTQSQPEMSVQEAETVTLSCTYDTSESDYYLFWYKQPPSRQMILVIRQEAYKQQNATENRFSVNFQKAAKSFSLKISDSQLGDAAMYFCAYRSAVNARLMFGDGTQLVVKPNIQNPDPAVYQLRDSKSSDKSVCLFTDFDSQTNVSQSKDSDVYITDKTVLDMRSMDFKSNSAVAWSNKSDFACANAFNNSIIPEDTFFPSPESSCDVKLVEKSFETDTNLNFQNLSVIGFRILLLKVAGFNLLMTLRLWSS</sequence>
<proteinExistence type="evidence at protein level"/>